<proteinExistence type="evidence at protein level"/>
<protein>
    <recommendedName>
        <fullName evidence="11">Voltage-gated potassium channel KCNC3</fullName>
    </recommendedName>
    <alternativeName>
        <fullName evidence="9">KSHIIID</fullName>
    </alternativeName>
    <alternativeName>
        <fullName>Potassium voltage-gated channel subfamily C member 3</fullName>
    </alternativeName>
    <alternativeName>
        <fullName evidence="10">Voltage-gated potassium channel subunit Kv3.3</fullName>
    </alternativeName>
</protein>
<gene>
    <name evidence="12" type="primary">Kcnc3</name>
</gene>
<feature type="chain" id="PRO_0000054057" description="Voltage-gated potassium channel KCNC3">
    <location>
        <begin position="1"/>
        <end position="889"/>
    </location>
</feature>
<feature type="topological domain" description="Cytoplasmic" evidence="5">
    <location>
        <begin position="1"/>
        <end position="291"/>
    </location>
</feature>
<feature type="transmembrane region" description="Helical; Name=Segment S1" evidence="5">
    <location>
        <begin position="292"/>
        <end position="310"/>
    </location>
</feature>
<feature type="transmembrane region" description="Helical; Name=Segment S2" evidence="5">
    <location>
        <begin position="352"/>
        <end position="371"/>
    </location>
</feature>
<feature type="topological domain" description="Cytoplasmic" evidence="5">
    <location>
        <begin position="372"/>
        <end position="380"/>
    </location>
</feature>
<feature type="transmembrane region" description="Helical; Name=Segment S3" evidence="5">
    <location>
        <begin position="381"/>
        <end position="399"/>
    </location>
</feature>
<feature type="transmembrane region" description="Helical; Voltage-sensor; Name=Segment S4" evidence="5">
    <location>
        <begin position="413"/>
        <end position="435"/>
    </location>
</feature>
<feature type="topological domain" description="Cytoplasmic" evidence="5">
    <location>
        <begin position="436"/>
        <end position="448"/>
    </location>
</feature>
<feature type="transmembrane region" description="Helical; Name=Segment S5" evidence="5">
    <location>
        <begin position="449"/>
        <end position="470"/>
    </location>
</feature>
<feature type="transmembrane region" description="Helical; Name=Segment S6" evidence="5">
    <location>
        <begin position="519"/>
        <end position="540"/>
    </location>
</feature>
<feature type="topological domain" description="Cytoplasmic" evidence="5">
    <location>
        <begin position="541"/>
        <end position="889"/>
    </location>
</feature>
<feature type="region of interest" description="Important for normal N-type inactivation" evidence="3">
    <location>
        <begin position="1"/>
        <end position="80"/>
    </location>
</feature>
<feature type="region of interest" description="Disordered" evidence="6">
    <location>
        <begin position="10"/>
        <end position="66"/>
    </location>
</feature>
<feature type="region of interest" description="Disordered" evidence="6">
    <location>
        <begin position="202"/>
        <end position="231"/>
    </location>
</feature>
<feature type="region of interest" description="Disordered" evidence="6">
    <location>
        <begin position="557"/>
        <end position="627"/>
    </location>
</feature>
<feature type="region of interest" description="Disordered" evidence="6">
    <location>
        <begin position="691"/>
        <end position="834"/>
    </location>
</feature>
<feature type="region of interest" description="Disordered" evidence="6">
    <location>
        <begin position="852"/>
        <end position="889"/>
    </location>
</feature>
<feature type="short sequence motif" description="Selectivity filter" evidence="1">
    <location>
        <begin position="504"/>
        <end position="509"/>
    </location>
</feature>
<feature type="compositionally biased region" description="Pro residues" evidence="6">
    <location>
        <begin position="24"/>
        <end position="42"/>
    </location>
</feature>
<feature type="compositionally biased region" description="Low complexity" evidence="6">
    <location>
        <begin position="211"/>
        <end position="222"/>
    </location>
</feature>
<feature type="compositionally biased region" description="Low complexity" evidence="6">
    <location>
        <begin position="748"/>
        <end position="764"/>
    </location>
</feature>
<feature type="compositionally biased region" description="Basic residues" evidence="6">
    <location>
        <begin position="794"/>
        <end position="808"/>
    </location>
</feature>
<feature type="binding site" evidence="2">
    <location>
        <position position="159"/>
    </location>
    <ligand>
        <name>Zn(2+)</name>
        <dbReference type="ChEBI" id="CHEBI:29105"/>
    </ligand>
</feature>
<feature type="binding site" evidence="2">
    <location>
        <position position="165"/>
    </location>
    <ligand>
        <name>Zn(2+)</name>
        <dbReference type="ChEBI" id="CHEBI:29105"/>
    </ligand>
</feature>
<feature type="binding site" evidence="2">
    <location>
        <position position="186"/>
    </location>
    <ligand>
        <name>Zn(2+)</name>
        <dbReference type="ChEBI" id="CHEBI:29105"/>
    </ligand>
</feature>
<feature type="binding site" evidence="2">
    <location>
        <position position="187"/>
    </location>
    <ligand>
        <name>Zn(2+)</name>
        <dbReference type="ChEBI" id="CHEBI:29105"/>
    </ligand>
</feature>
<feature type="binding site" evidence="2">
    <location>
        <position position="504"/>
    </location>
    <ligand>
        <name>K(+)</name>
        <dbReference type="ChEBI" id="CHEBI:29103"/>
        <note>ligand shared between homotetrameric partners</note>
    </ligand>
</feature>
<feature type="binding site" evidence="2">
    <location>
        <position position="505"/>
    </location>
    <ligand>
        <name>K(+)</name>
        <dbReference type="ChEBI" id="CHEBI:29103"/>
        <note>ligand shared between homotetrameric partners</note>
    </ligand>
</feature>
<feature type="binding site" evidence="2">
    <location>
        <position position="506"/>
    </location>
    <ligand>
        <name>K(+)</name>
        <dbReference type="ChEBI" id="CHEBI:29103"/>
        <note>ligand shared between homotetrameric partners</note>
    </ligand>
</feature>
<feature type="binding site" evidence="2">
    <location>
        <position position="507"/>
    </location>
    <ligand>
        <name>K(+)</name>
        <dbReference type="ChEBI" id="CHEBI:29103"/>
        <note>ligand shared between homotetrameric partners</note>
    </ligand>
</feature>
<feature type="modified residue" description="Omega-N-methylarginine" evidence="4">
    <location>
        <position position="626"/>
    </location>
</feature>
<feature type="modified residue" description="Phosphoserine" evidence="4">
    <location>
        <position position="697"/>
    </location>
</feature>
<feature type="modified residue" description="Phosphoserine" evidence="4">
    <location>
        <position position="702"/>
    </location>
</feature>
<feature type="modified residue" description="Phosphothreonine" evidence="4">
    <location>
        <position position="759"/>
    </location>
</feature>
<feature type="glycosylation site" description="N-linked (GlcNAc...) asparagine" evidence="5">
    <location>
        <position position="321"/>
    </location>
</feature>
<feature type="splice variant" id="VSP_001022" description="In isoform KSHIIID.2." evidence="9">
    <original>NDLGVLEEGDPRPNGDPA</original>
    <variation>EAGARTGGVGRPGGWGSG</variation>
    <location>
        <begin position="662"/>
        <end position="679"/>
    </location>
</feature>
<feature type="splice variant" id="VSP_001023" description="In isoform KSHIIID.2." evidence="9">
    <location>
        <begin position="680"/>
        <end position="889"/>
    </location>
</feature>
<keyword id="KW-0025">Alternative splicing</keyword>
<keyword id="KW-1003">Cell membrane</keyword>
<keyword id="KW-0966">Cell projection</keyword>
<keyword id="KW-0963">Cytoplasm</keyword>
<keyword id="KW-0206">Cytoskeleton</keyword>
<keyword id="KW-0325">Glycoprotein</keyword>
<keyword id="KW-0407">Ion channel</keyword>
<keyword id="KW-0406">Ion transport</keyword>
<keyword id="KW-0472">Membrane</keyword>
<keyword id="KW-0479">Metal-binding</keyword>
<keyword id="KW-0488">Methylation</keyword>
<keyword id="KW-0597">Phosphoprotein</keyword>
<keyword id="KW-0628">Postsynaptic cell membrane</keyword>
<keyword id="KW-0630">Potassium</keyword>
<keyword id="KW-0631">Potassium channel</keyword>
<keyword id="KW-0633">Potassium transport</keyword>
<keyword id="KW-1185">Reference proteome</keyword>
<keyword id="KW-0770">Synapse</keyword>
<keyword id="KW-0812">Transmembrane</keyword>
<keyword id="KW-1133">Transmembrane helix</keyword>
<keyword id="KW-0813">Transport</keyword>
<keyword id="KW-0851">Voltage-gated channel</keyword>
<keyword id="KW-0862">Zinc</keyword>
<accession>Q01956</accession>
<sequence length="889" mass="94393">MLSSVCVWSFSGRQGTRKQHSQPAPTPQPPESSPPPLLPPPQQQCAQPGTAASPAGAPLSCGPGGRRAEPCSGLPAVAMGRHGGGGGDSGKIVINVGGVRHETYRSTLRTLPGTRLAGLTEPEAAARFDYDPGTDEFFFDRHPGVFAYVLNYYRTGKLHCPADVCGPLFEEELGFWGIDETDVEACCWMTYRQHRDAEEALDSFEAPDSSGNANANAGGAHDAGLDDEAGAGGGGLDGAGGELKRLCFQDAGGGAGGPAGGPGGAGGTWWRRWQPRVWALFEDPYSSRAARYVAFASLFFILISITTFCLETHEGFIHISNKTVTQASPIPGAPPENITNVEVETEPFLTYVEGVCVVWFTFEFLMRVTFCPDKVEFLKSSLNIIDCVAILPFYLEVGLSGLSSKAAKDVLGFLRVVRFVRILRIFKLTRHFVGLRVLGHTLRASTNEFLLLIIFLALGVLIFATMIYYAERIGADPDDILGSNHTYFKNIPIGFWWAVVTMTTLGYGDMYPKTWSGMLVGALCALAGVLTIAMPVPVIVNNFGMYYSLAMAKQKLPKKKNKHIPRPPQPGSPNYCKPDPPPPPPPHPHHGSGGISPPPPITPPSMGVTVAGAYPPGPHTHPGLLRGGAGGLGIMGLPPLPAPGEPCPLAQEEVIETNRAGNDLGVLEEGDPRPNGDPAAAALAHEDCPAIDQPAMSPEDKSPITPGSRGRYSRDRACFLVTDYAPSPDGSIRKATGAPPLPPHAGVSQAPPASCPTSTPTQQPGYPPSGRAPSPPQATPEAPAIFDVWLPPFHRSHQPPGKHQRGGRHPGVSPSPQQRACVGEPPSASHPQSLTLCISVPSSCHRLRPRETLGFPLSLPPRLATGNGGRECPRDPGLPFPSRHSSPAV</sequence>
<name>KCNC3_RAT</name>
<dbReference type="EMBL" id="M84210">
    <property type="protein sequence ID" value="AAA73182.1"/>
    <property type="molecule type" value="mRNA"/>
</dbReference>
<dbReference type="EMBL" id="M84211">
    <property type="protein sequence ID" value="AAA41470.1"/>
    <property type="molecule type" value="mRNA"/>
</dbReference>
<dbReference type="SMR" id="Q01956"/>
<dbReference type="FunCoup" id="Q01956">
    <property type="interactions" value="441"/>
</dbReference>
<dbReference type="STRING" id="10116.ENSRNOP00000027062"/>
<dbReference type="GuidetoPHARMACOLOGY" id="550"/>
<dbReference type="GlyCosmos" id="Q01956">
    <property type="glycosylation" value="1 site, No reported glycans"/>
</dbReference>
<dbReference type="GlyGen" id="Q01956">
    <property type="glycosylation" value="5 sites"/>
</dbReference>
<dbReference type="PaxDb" id="10116-ENSRNOP00000027062"/>
<dbReference type="ABCD" id="Q01956">
    <property type="antibodies" value="1 sequenced antibody"/>
</dbReference>
<dbReference type="UCSC" id="RGD:621358">
    <molecule id="Q01956-1"/>
    <property type="organism name" value="rat"/>
</dbReference>
<dbReference type="AGR" id="RGD:621358"/>
<dbReference type="RGD" id="621358">
    <property type="gene designation" value="Kcnc3"/>
</dbReference>
<dbReference type="eggNOG" id="KOG3713">
    <property type="taxonomic scope" value="Eukaryota"/>
</dbReference>
<dbReference type="InParanoid" id="Q01956"/>
<dbReference type="PhylomeDB" id="Q01956"/>
<dbReference type="Reactome" id="R-RNO-1296072">
    <property type="pathway name" value="Voltage gated Potassium channels"/>
</dbReference>
<dbReference type="PRO" id="PR:Q01956"/>
<dbReference type="Proteomes" id="UP000002494">
    <property type="component" value="Unplaced"/>
</dbReference>
<dbReference type="GO" id="GO:0030673">
    <property type="term" value="C:axolemma"/>
    <property type="evidence" value="ECO:0000266"/>
    <property type="project" value="RGD"/>
</dbReference>
<dbReference type="GO" id="GO:0043679">
    <property type="term" value="C:axon terminus"/>
    <property type="evidence" value="ECO:0000266"/>
    <property type="project" value="RGD"/>
</dbReference>
<dbReference type="GO" id="GO:0044305">
    <property type="term" value="C:calyx of Held"/>
    <property type="evidence" value="ECO:0000266"/>
    <property type="project" value="RGD"/>
</dbReference>
<dbReference type="GO" id="GO:0005938">
    <property type="term" value="C:cell cortex"/>
    <property type="evidence" value="ECO:0000266"/>
    <property type="project" value="RGD"/>
</dbReference>
<dbReference type="GO" id="GO:0005856">
    <property type="term" value="C:cytoskeleton"/>
    <property type="evidence" value="ECO:0007669"/>
    <property type="project" value="UniProtKB-SubCell"/>
</dbReference>
<dbReference type="GO" id="GO:0030425">
    <property type="term" value="C:dendrite"/>
    <property type="evidence" value="ECO:0000314"/>
    <property type="project" value="UniProtKB"/>
</dbReference>
<dbReference type="GO" id="GO:0032590">
    <property type="term" value="C:dendrite membrane"/>
    <property type="evidence" value="ECO:0000266"/>
    <property type="project" value="RGD"/>
</dbReference>
<dbReference type="GO" id="GO:0032591">
    <property type="term" value="C:dendritic spine membrane"/>
    <property type="evidence" value="ECO:0007669"/>
    <property type="project" value="UniProtKB-SubCell"/>
</dbReference>
<dbReference type="GO" id="GO:0098978">
    <property type="term" value="C:glutamatergic synapse"/>
    <property type="evidence" value="ECO:0000314"/>
    <property type="project" value="SynGO"/>
</dbReference>
<dbReference type="GO" id="GO:0031594">
    <property type="term" value="C:neuromuscular junction"/>
    <property type="evidence" value="ECO:0000266"/>
    <property type="project" value="RGD"/>
</dbReference>
<dbReference type="GO" id="GO:0032809">
    <property type="term" value="C:neuronal cell body membrane"/>
    <property type="evidence" value="ECO:0000266"/>
    <property type="project" value="RGD"/>
</dbReference>
<dbReference type="GO" id="GO:0043204">
    <property type="term" value="C:perikaryon"/>
    <property type="evidence" value="ECO:0007669"/>
    <property type="project" value="UniProtKB-SubCell"/>
</dbReference>
<dbReference type="GO" id="GO:0005886">
    <property type="term" value="C:plasma membrane"/>
    <property type="evidence" value="ECO:0000250"/>
    <property type="project" value="UniProtKB"/>
</dbReference>
<dbReference type="GO" id="GO:0045211">
    <property type="term" value="C:postsynaptic membrane"/>
    <property type="evidence" value="ECO:0000314"/>
    <property type="project" value="SynGO"/>
</dbReference>
<dbReference type="GO" id="GO:0042734">
    <property type="term" value="C:presynaptic membrane"/>
    <property type="evidence" value="ECO:0000314"/>
    <property type="project" value="SynGO"/>
</dbReference>
<dbReference type="GO" id="GO:0008076">
    <property type="term" value="C:voltage-gated potassium channel complex"/>
    <property type="evidence" value="ECO:0000250"/>
    <property type="project" value="UniProtKB"/>
</dbReference>
<dbReference type="GO" id="GO:0005251">
    <property type="term" value="F:delayed rectifier potassium channel activity"/>
    <property type="evidence" value="ECO:0000318"/>
    <property type="project" value="GO_Central"/>
</dbReference>
<dbReference type="GO" id="GO:0046872">
    <property type="term" value="F:metal ion binding"/>
    <property type="evidence" value="ECO:0007669"/>
    <property type="project" value="UniProtKB-KW"/>
</dbReference>
<dbReference type="GO" id="GO:0005249">
    <property type="term" value="F:voltage-gated potassium channel activity"/>
    <property type="evidence" value="ECO:0000314"/>
    <property type="project" value="UniProtKB"/>
</dbReference>
<dbReference type="GO" id="GO:0001508">
    <property type="term" value="P:action potential"/>
    <property type="evidence" value="ECO:0000318"/>
    <property type="project" value="GO_Central"/>
</dbReference>
<dbReference type="GO" id="GO:0022038">
    <property type="term" value="P:corpus callosum development"/>
    <property type="evidence" value="ECO:0000270"/>
    <property type="project" value="RGD"/>
</dbReference>
<dbReference type="GO" id="GO:0030866">
    <property type="term" value="P:cortical actin cytoskeleton organization"/>
    <property type="evidence" value="ECO:0000250"/>
    <property type="project" value="UniProtKB"/>
</dbReference>
<dbReference type="GO" id="GO:0021554">
    <property type="term" value="P:optic nerve development"/>
    <property type="evidence" value="ECO:0000270"/>
    <property type="project" value="RGD"/>
</dbReference>
<dbReference type="GO" id="GO:0071805">
    <property type="term" value="P:potassium ion transmembrane transport"/>
    <property type="evidence" value="ECO:0000250"/>
    <property type="project" value="UniProtKB"/>
</dbReference>
<dbReference type="GO" id="GO:0006813">
    <property type="term" value="P:potassium ion transport"/>
    <property type="evidence" value="ECO:0000250"/>
    <property type="project" value="UniProtKB"/>
</dbReference>
<dbReference type="GO" id="GO:0051260">
    <property type="term" value="P:protein homooligomerization"/>
    <property type="evidence" value="ECO:0007669"/>
    <property type="project" value="InterPro"/>
</dbReference>
<dbReference type="GO" id="GO:0051262">
    <property type="term" value="P:protein tetramerization"/>
    <property type="evidence" value="ECO:0000250"/>
    <property type="project" value="UniProtKB"/>
</dbReference>
<dbReference type="GO" id="GO:0046928">
    <property type="term" value="P:regulation of neurotransmitter secretion"/>
    <property type="evidence" value="ECO:0000266"/>
    <property type="project" value="RGD"/>
</dbReference>
<dbReference type="GO" id="GO:1900242">
    <property type="term" value="P:regulation of synaptic vesicle endocytosis"/>
    <property type="evidence" value="ECO:0000266"/>
    <property type="project" value="RGD"/>
</dbReference>
<dbReference type="CDD" id="cd18414">
    <property type="entry name" value="BTB_KCNC1_3"/>
    <property type="match status" value="1"/>
</dbReference>
<dbReference type="FunFam" id="1.10.287.70:FF:000011">
    <property type="entry name" value="Potassium channel, voltage-gated Shaw-related subfamily C, member 4"/>
    <property type="match status" value="1"/>
</dbReference>
<dbReference type="FunFam" id="1.20.120.350:FF:000014">
    <property type="entry name" value="Potassium channel, voltage-gated Shaw-related subfamily C, member 4"/>
    <property type="match status" value="1"/>
</dbReference>
<dbReference type="FunFam" id="3.30.710.10:FF:000002">
    <property type="entry name" value="Potassium voltage-gated channel subfamily C member 2"/>
    <property type="match status" value="1"/>
</dbReference>
<dbReference type="Gene3D" id="1.10.287.70">
    <property type="match status" value="1"/>
</dbReference>
<dbReference type="Gene3D" id="3.30.710.10">
    <property type="entry name" value="Potassium Channel Kv1.1, Chain A"/>
    <property type="match status" value="1"/>
</dbReference>
<dbReference type="Gene3D" id="1.20.120.350">
    <property type="entry name" value="Voltage-gated potassium channels. Chain C"/>
    <property type="match status" value="1"/>
</dbReference>
<dbReference type="InterPro" id="IPR000210">
    <property type="entry name" value="BTB/POZ_dom"/>
</dbReference>
<dbReference type="InterPro" id="IPR005821">
    <property type="entry name" value="Ion_trans_dom"/>
</dbReference>
<dbReference type="InterPro" id="IPR003968">
    <property type="entry name" value="K_chnl_volt-dep_Kv"/>
</dbReference>
<dbReference type="InterPro" id="IPR003974">
    <property type="entry name" value="K_chnl_volt-dep_Kv3"/>
</dbReference>
<dbReference type="InterPro" id="IPR005404">
    <property type="entry name" value="K_chnl_volt-dep_Kv3.3"/>
</dbReference>
<dbReference type="InterPro" id="IPR011333">
    <property type="entry name" value="SKP1/BTB/POZ_sf"/>
</dbReference>
<dbReference type="InterPro" id="IPR003131">
    <property type="entry name" value="T1-type_BTB"/>
</dbReference>
<dbReference type="InterPro" id="IPR028325">
    <property type="entry name" value="VG_K_chnl"/>
</dbReference>
<dbReference type="InterPro" id="IPR027359">
    <property type="entry name" value="Volt_channel_dom_sf"/>
</dbReference>
<dbReference type="PANTHER" id="PTHR11537:SF184">
    <property type="entry name" value="POTASSIUM VOLTAGE-GATED CHANNEL SUBFAMILY C MEMBER 3"/>
    <property type="match status" value="1"/>
</dbReference>
<dbReference type="PANTHER" id="PTHR11537">
    <property type="entry name" value="VOLTAGE-GATED POTASSIUM CHANNEL"/>
    <property type="match status" value="1"/>
</dbReference>
<dbReference type="Pfam" id="PF02214">
    <property type="entry name" value="BTB_2"/>
    <property type="match status" value="1"/>
</dbReference>
<dbReference type="Pfam" id="PF00520">
    <property type="entry name" value="Ion_trans"/>
    <property type="match status" value="1"/>
</dbReference>
<dbReference type="PRINTS" id="PR00169">
    <property type="entry name" value="KCHANNEL"/>
</dbReference>
<dbReference type="PRINTS" id="PR01582">
    <property type="entry name" value="KV33CHANNEL"/>
</dbReference>
<dbReference type="PRINTS" id="PR01491">
    <property type="entry name" value="KVCHANNEL"/>
</dbReference>
<dbReference type="PRINTS" id="PR01498">
    <property type="entry name" value="SHAWCHANNEL"/>
</dbReference>
<dbReference type="SMART" id="SM00225">
    <property type="entry name" value="BTB"/>
    <property type="match status" value="1"/>
</dbReference>
<dbReference type="SUPFAM" id="SSF54695">
    <property type="entry name" value="POZ domain"/>
    <property type="match status" value="1"/>
</dbReference>
<dbReference type="SUPFAM" id="SSF81324">
    <property type="entry name" value="Voltage-gated potassium channels"/>
    <property type="match status" value="1"/>
</dbReference>
<reference key="1">
    <citation type="journal article" date="1992" name="Proc. R. Soc. B">
        <title>Cloning of ShIII (Shaw-like) cDNAs encoding a novel high-voltage-activating, TEA-sensitive, type-A K+ channel.</title>
        <authorList>
            <person name="de Miera E.V.-S."/>
            <person name="Moreno H."/>
            <person name="Fruhling D."/>
            <person name="Kentros C."/>
            <person name="Rudy B."/>
        </authorList>
    </citation>
    <scope>NUCLEOTIDE SEQUENCE [MRNA] (ISOFORMS KSHIIID.1 AND KSHIIID.2)</scope>
    <scope>FUNCTION</scope>
    <scope>TRANSPORTER ACTIVITY</scope>
    <scope>SUBCELLULAR LOCATION</scope>
    <source>
        <tissue>Brain</tissue>
    </source>
</reference>
<reference key="2">
    <citation type="journal article" date="2010" name="Histochem. Cell Biol.">
        <title>Precise localization of the voltage-gated potassium channel subunits Kv3.1b and Kv3.3 revealed in the molecular layer of the rat cerebellar cortex by a pre-embedding immunogold method.</title>
        <authorList>
            <person name="Puente N."/>
            <person name="Mendizabal-Zubiaga J."/>
            <person name="Elezgarai I."/>
            <person name="Reguero L."/>
            <person name="Buceta I."/>
            <person name="Grandes P."/>
        </authorList>
    </citation>
    <scope>SUBCELLULAR LOCATION</scope>
    <scope>TISSUE SPECIFICITY</scope>
</reference>
<comment type="function">
    <text evidence="3 4 7">Voltage-gated potassium channel that plays an important role in the rapid repolarization of fast-firing brain neurons. The channel opens in response to the voltage difference across the membrane, forming a potassium-selective channel through which potassium ions pass in accordance with their electrochemical gradient. The channel displays rapid activation and inactivation kinetics (PubMed:1381835). It plays a role in the regulation of the frequency, shape and duration of action potentials in Purkinje cells. Required for normal survival of cerebellar neurons, probably via its role in regulating the duration and frequency of action potentials that in turn regulate the activity of voltage-gated Ca(2+) channels and cellular Ca(2+) homeostasis. Required for normal motor function (By similarity). Plays a role in the reorganization of the cortical actin cytoskeleton and the formation of actin veil structures in neuronal growth cones via its interaction with HAX1 and the Arp2/3 complex (By similarity).</text>
</comment>
<comment type="catalytic activity">
    <reaction evidence="7">
        <text>K(+)(in) = K(+)(out)</text>
        <dbReference type="Rhea" id="RHEA:29463"/>
        <dbReference type="ChEBI" id="CHEBI:29103"/>
    </reaction>
</comment>
<comment type="subunit">
    <text evidence="3">Homotetramer. Heterotetramer with KCNC1. Interacts (via C-terminus) with HAX1; this interaction modulates channel gating. Identified in a complex with ACTR3, a subunit of the Arp2/3 complex; this interaction is indirect and depends on the presence of HAX1.</text>
</comment>
<comment type="subcellular location">
    <subcellularLocation>
        <location evidence="7">Cell membrane</location>
        <topology evidence="5">Multi-pass membrane protein</topology>
    </subcellularLocation>
    <subcellularLocation>
        <location evidence="8">Presynaptic cell membrane</location>
        <topology evidence="5">Multi-pass membrane protein</topology>
    </subcellularLocation>
    <subcellularLocation>
        <location evidence="4">Perikaryon</location>
    </subcellularLocation>
    <subcellularLocation>
        <location evidence="4">Cell projection</location>
        <location evidence="4">Axon</location>
    </subcellularLocation>
    <subcellularLocation>
        <location evidence="4">Cell projection</location>
        <location evidence="4">Dendrite</location>
    </subcellularLocation>
    <subcellularLocation>
        <location evidence="8">Cell projection</location>
        <location evidence="8">Dendritic spine membrane</location>
        <topology evidence="5">Multi-pass membrane protein</topology>
    </subcellularLocation>
    <subcellularLocation>
        <location evidence="3">Cytoplasm</location>
        <location evidence="3">Cell cortex</location>
    </subcellularLocation>
    <subcellularLocation>
        <location evidence="3">Cytoplasm</location>
        <location evidence="3">Cytoskeleton</location>
    </subcellularLocation>
    <text evidence="3 4 8">Detected on Purkinje cell dendritic spines, positioned perisynaptically but also in extrasynaptic positions along the spine membranes (PubMed:20857303). Detected at presynaptic calices of Held (By similarity). Colocalizes with the cortical actin cytoskeleton and the Arp2/3 complex (By similarity).</text>
</comment>
<comment type="alternative products">
    <event type="alternative splicing"/>
    <isoform>
        <id>Q01956-1</id>
        <name>KSHIIID.1</name>
        <sequence type="displayed"/>
    </isoform>
    <isoform>
        <id>Q01956-2</id>
        <name>KSHIIID.2</name>
        <sequence type="described" ref="VSP_001022 VSP_001023"/>
    </isoform>
</comment>
<comment type="tissue specificity">
    <text evidence="8">Detected on Purkinje cells in the cerebellum molecular layer (at protein level).</text>
</comment>
<comment type="domain">
    <text evidence="11">The segment S4 is probably the voltage-sensor and is characterized by a series of positively charged amino acids at every third position.</text>
</comment>
<comment type="domain">
    <text evidence="3">The cytoplasmic N-terminus mediates N-type inactivation.</text>
</comment>
<comment type="domain">
    <text evidence="3">The C-terminal cytoplasmic tail contributes to the regulation of channel inactivation and to the interaction with HAX1 and the Arp2/3 complex.</text>
</comment>
<comment type="PTM">
    <text evidence="3">N-glycosylated.</text>
</comment>
<comment type="similarity">
    <text evidence="11">Belongs to the potassium channel family. C (Shaw) (TC 1.A.1.2) subfamily. Kv3.3/KCNC3 sub-subfamily.</text>
</comment>
<evidence type="ECO:0000250" key="1"/>
<evidence type="ECO:0000250" key="2">
    <source>
        <dbReference type="UniProtKB" id="P48547"/>
    </source>
</evidence>
<evidence type="ECO:0000250" key="3">
    <source>
        <dbReference type="UniProtKB" id="Q14003"/>
    </source>
</evidence>
<evidence type="ECO:0000250" key="4">
    <source>
        <dbReference type="UniProtKB" id="Q63959"/>
    </source>
</evidence>
<evidence type="ECO:0000255" key="5"/>
<evidence type="ECO:0000256" key="6">
    <source>
        <dbReference type="SAM" id="MobiDB-lite"/>
    </source>
</evidence>
<evidence type="ECO:0000269" key="7">
    <source>
    </source>
</evidence>
<evidence type="ECO:0000269" key="8">
    <source>
    </source>
</evidence>
<evidence type="ECO:0000303" key="9">
    <source>
    </source>
</evidence>
<evidence type="ECO:0000303" key="10">
    <source>
    </source>
</evidence>
<evidence type="ECO:0000305" key="11"/>
<evidence type="ECO:0000312" key="12">
    <source>
        <dbReference type="RGD" id="621358"/>
    </source>
</evidence>
<organism>
    <name type="scientific">Rattus norvegicus</name>
    <name type="common">Rat</name>
    <dbReference type="NCBI Taxonomy" id="10116"/>
    <lineage>
        <taxon>Eukaryota</taxon>
        <taxon>Metazoa</taxon>
        <taxon>Chordata</taxon>
        <taxon>Craniata</taxon>
        <taxon>Vertebrata</taxon>
        <taxon>Euteleostomi</taxon>
        <taxon>Mammalia</taxon>
        <taxon>Eutheria</taxon>
        <taxon>Euarchontoglires</taxon>
        <taxon>Glires</taxon>
        <taxon>Rodentia</taxon>
        <taxon>Myomorpha</taxon>
        <taxon>Muroidea</taxon>
        <taxon>Muridae</taxon>
        <taxon>Murinae</taxon>
        <taxon>Rattus</taxon>
    </lineage>
</organism>